<proteinExistence type="inferred from homology"/>
<keyword id="KW-0687">Ribonucleoprotein</keyword>
<keyword id="KW-0689">Ribosomal protein</keyword>
<sequence length="61" mass="6871">MTQAKTFKVTLVKSLIGRKENHIASARGLGLRKINHTVEVLDTPENRGMANKIYYMVKIEG</sequence>
<dbReference type="EMBL" id="AM286280">
    <property type="protein sequence ID" value="CAL08359.1"/>
    <property type="molecule type" value="Genomic_DNA"/>
</dbReference>
<dbReference type="RefSeq" id="WP_003014363.1">
    <property type="nucleotide sequence ID" value="NC_008245.1"/>
</dbReference>
<dbReference type="SMR" id="Q14JA2"/>
<dbReference type="GeneID" id="75264243"/>
<dbReference type="KEGG" id="ftf:FTF0343"/>
<dbReference type="HOGENOM" id="CLU_131047_1_4_6"/>
<dbReference type="GO" id="GO:0022625">
    <property type="term" value="C:cytosolic large ribosomal subunit"/>
    <property type="evidence" value="ECO:0007669"/>
    <property type="project" value="TreeGrafter"/>
</dbReference>
<dbReference type="GO" id="GO:0003735">
    <property type="term" value="F:structural constituent of ribosome"/>
    <property type="evidence" value="ECO:0007669"/>
    <property type="project" value="InterPro"/>
</dbReference>
<dbReference type="GO" id="GO:0006412">
    <property type="term" value="P:translation"/>
    <property type="evidence" value="ECO:0007669"/>
    <property type="project" value="UniProtKB-UniRule"/>
</dbReference>
<dbReference type="CDD" id="cd01658">
    <property type="entry name" value="Ribosomal_L30"/>
    <property type="match status" value="1"/>
</dbReference>
<dbReference type="FunFam" id="3.30.1390.20:FF:000001">
    <property type="entry name" value="50S ribosomal protein L30"/>
    <property type="match status" value="1"/>
</dbReference>
<dbReference type="Gene3D" id="3.30.1390.20">
    <property type="entry name" value="Ribosomal protein L30, ferredoxin-like fold domain"/>
    <property type="match status" value="1"/>
</dbReference>
<dbReference type="HAMAP" id="MF_01371_B">
    <property type="entry name" value="Ribosomal_uL30_B"/>
    <property type="match status" value="1"/>
</dbReference>
<dbReference type="InterPro" id="IPR036919">
    <property type="entry name" value="Ribo_uL30_ferredoxin-like_sf"/>
</dbReference>
<dbReference type="InterPro" id="IPR005996">
    <property type="entry name" value="Ribosomal_uL30_bac-type"/>
</dbReference>
<dbReference type="InterPro" id="IPR016082">
    <property type="entry name" value="Ribosomal_uL30_ferredoxin-like"/>
</dbReference>
<dbReference type="NCBIfam" id="TIGR01308">
    <property type="entry name" value="rpmD_bact"/>
    <property type="match status" value="1"/>
</dbReference>
<dbReference type="PANTHER" id="PTHR15892:SF2">
    <property type="entry name" value="LARGE RIBOSOMAL SUBUNIT PROTEIN UL30M"/>
    <property type="match status" value="1"/>
</dbReference>
<dbReference type="PANTHER" id="PTHR15892">
    <property type="entry name" value="MITOCHONDRIAL RIBOSOMAL PROTEIN L30"/>
    <property type="match status" value="1"/>
</dbReference>
<dbReference type="Pfam" id="PF00327">
    <property type="entry name" value="Ribosomal_L30"/>
    <property type="match status" value="1"/>
</dbReference>
<dbReference type="PIRSF" id="PIRSF002211">
    <property type="entry name" value="Ribosomal_L30_bac-type"/>
    <property type="match status" value="1"/>
</dbReference>
<dbReference type="SUPFAM" id="SSF55129">
    <property type="entry name" value="Ribosomal protein L30p/L7e"/>
    <property type="match status" value="1"/>
</dbReference>
<comment type="subunit">
    <text evidence="1">Part of the 50S ribosomal subunit.</text>
</comment>
<comment type="similarity">
    <text evidence="1">Belongs to the universal ribosomal protein uL30 family.</text>
</comment>
<evidence type="ECO:0000255" key="1">
    <source>
        <dbReference type="HAMAP-Rule" id="MF_01371"/>
    </source>
</evidence>
<evidence type="ECO:0000305" key="2"/>
<protein>
    <recommendedName>
        <fullName evidence="1">Large ribosomal subunit protein uL30</fullName>
    </recommendedName>
    <alternativeName>
        <fullName evidence="2">50S ribosomal protein L30</fullName>
    </alternativeName>
</protein>
<gene>
    <name evidence="1" type="primary">rpmD</name>
    <name type="ordered locus">FTF0343</name>
</gene>
<accession>Q14JA2</accession>
<reference key="1">
    <citation type="journal article" date="2007" name="PLoS ONE">
        <title>Genome sequencing shows that European isolates of Francisella tularensis subspecies tularensis are almost identical to US laboratory strain Schu S4.</title>
        <authorList>
            <person name="Chaudhuri R.R."/>
            <person name="Ren C.-P."/>
            <person name="Desmond L."/>
            <person name="Vincent G.A."/>
            <person name="Silman N.J."/>
            <person name="Brehm J.K."/>
            <person name="Elmore M.J."/>
            <person name="Hudson M.J."/>
            <person name="Forsman M."/>
            <person name="Isherwood K.E."/>
            <person name="Gurycova D."/>
            <person name="Minton N.P."/>
            <person name="Titball R.W."/>
            <person name="Pallen M.J."/>
            <person name="Vipond R."/>
        </authorList>
    </citation>
    <scope>NUCLEOTIDE SEQUENCE [LARGE SCALE GENOMIC DNA]</scope>
    <source>
        <strain>FSC 198</strain>
    </source>
</reference>
<organism>
    <name type="scientific">Francisella tularensis subsp. tularensis (strain FSC 198)</name>
    <dbReference type="NCBI Taxonomy" id="393115"/>
    <lineage>
        <taxon>Bacteria</taxon>
        <taxon>Pseudomonadati</taxon>
        <taxon>Pseudomonadota</taxon>
        <taxon>Gammaproteobacteria</taxon>
        <taxon>Thiotrichales</taxon>
        <taxon>Francisellaceae</taxon>
        <taxon>Francisella</taxon>
    </lineage>
</organism>
<name>RL30_FRAT1</name>
<feature type="chain" id="PRO_0000273789" description="Large ribosomal subunit protein uL30">
    <location>
        <begin position="1"/>
        <end position="61"/>
    </location>
</feature>